<organism>
    <name type="scientific">Aeromonas salmonicida (strain A449)</name>
    <dbReference type="NCBI Taxonomy" id="382245"/>
    <lineage>
        <taxon>Bacteria</taxon>
        <taxon>Pseudomonadati</taxon>
        <taxon>Pseudomonadota</taxon>
        <taxon>Gammaproteobacteria</taxon>
        <taxon>Aeromonadales</taxon>
        <taxon>Aeromonadaceae</taxon>
        <taxon>Aeromonas</taxon>
    </lineage>
</organism>
<protein>
    <recommendedName>
        <fullName evidence="1">Glycine--tRNA ligase beta subunit</fullName>
        <ecNumber evidence="1">6.1.1.14</ecNumber>
    </recommendedName>
    <alternativeName>
        <fullName evidence="1">Glycyl-tRNA synthetase beta subunit</fullName>
        <shortName evidence="1">GlyRS</shortName>
    </alternativeName>
</protein>
<evidence type="ECO:0000255" key="1">
    <source>
        <dbReference type="HAMAP-Rule" id="MF_00255"/>
    </source>
</evidence>
<proteinExistence type="inferred from homology"/>
<dbReference type="EC" id="6.1.1.14" evidence="1"/>
<dbReference type="EMBL" id="CP000644">
    <property type="protein sequence ID" value="ABO92185.1"/>
    <property type="molecule type" value="Genomic_DNA"/>
</dbReference>
<dbReference type="RefSeq" id="WP_005320601.1">
    <property type="nucleotide sequence ID" value="NC_009348.1"/>
</dbReference>
<dbReference type="SMR" id="A4STG3"/>
<dbReference type="STRING" id="29491.GCA_000820065_02835"/>
<dbReference type="KEGG" id="asa:ASA_4261"/>
<dbReference type="eggNOG" id="COG0751">
    <property type="taxonomic scope" value="Bacteria"/>
</dbReference>
<dbReference type="HOGENOM" id="CLU_007220_2_2_6"/>
<dbReference type="Proteomes" id="UP000000225">
    <property type="component" value="Chromosome"/>
</dbReference>
<dbReference type="GO" id="GO:0005829">
    <property type="term" value="C:cytosol"/>
    <property type="evidence" value="ECO:0007669"/>
    <property type="project" value="TreeGrafter"/>
</dbReference>
<dbReference type="GO" id="GO:0004814">
    <property type="term" value="F:arginine-tRNA ligase activity"/>
    <property type="evidence" value="ECO:0007669"/>
    <property type="project" value="InterPro"/>
</dbReference>
<dbReference type="GO" id="GO:0005524">
    <property type="term" value="F:ATP binding"/>
    <property type="evidence" value="ECO:0007669"/>
    <property type="project" value="UniProtKB-UniRule"/>
</dbReference>
<dbReference type="GO" id="GO:0004820">
    <property type="term" value="F:glycine-tRNA ligase activity"/>
    <property type="evidence" value="ECO:0007669"/>
    <property type="project" value="UniProtKB-UniRule"/>
</dbReference>
<dbReference type="GO" id="GO:0006420">
    <property type="term" value="P:arginyl-tRNA aminoacylation"/>
    <property type="evidence" value="ECO:0007669"/>
    <property type="project" value="InterPro"/>
</dbReference>
<dbReference type="GO" id="GO:0006426">
    <property type="term" value="P:glycyl-tRNA aminoacylation"/>
    <property type="evidence" value="ECO:0007669"/>
    <property type="project" value="UniProtKB-UniRule"/>
</dbReference>
<dbReference type="HAMAP" id="MF_00255">
    <property type="entry name" value="Gly_tRNA_synth_beta"/>
    <property type="match status" value="1"/>
</dbReference>
<dbReference type="InterPro" id="IPR008909">
    <property type="entry name" value="DALR_anticod-bd"/>
</dbReference>
<dbReference type="InterPro" id="IPR015944">
    <property type="entry name" value="Gly-tRNA-synth_bsu"/>
</dbReference>
<dbReference type="InterPro" id="IPR006194">
    <property type="entry name" value="Gly-tRNA-synth_heterodimer"/>
</dbReference>
<dbReference type="NCBIfam" id="TIGR00211">
    <property type="entry name" value="glyS"/>
    <property type="match status" value="1"/>
</dbReference>
<dbReference type="PANTHER" id="PTHR30075:SF2">
    <property type="entry name" value="GLYCINE--TRNA LIGASE, CHLOROPLASTIC_MITOCHONDRIAL 2"/>
    <property type="match status" value="1"/>
</dbReference>
<dbReference type="PANTHER" id="PTHR30075">
    <property type="entry name" value="GLYCYL-TRNA SYNTHETASE"/>
    <property type="match status" value="1"/>
</dbReference>
<dbReference type="Pfam" id="PF05746">
    <property type="entry name" value="DALR_1"/>
    <property type="match status" value="1"/>
</dbReference>
<dbReference type="Pfam" id="PF02092">
    <property type="entry name" value="tRNA_synt_2f"/>
    <property type="match status" value="1"/>
</dbReference>
<dbReference type="PRINTS" id="PR01045">
    <property type="entry name" value="TRNASYNTHGB"/>
</dbReference>
<dbReference type="SMART" id="SM00836">
    <property type="entry name" value="DALR_1"/>
    <property type="match status" value="1"/>
</dbReference>
<dbReference type="SUPFAM" id="SSF109604">
    <property type="entry name" value="HD-domain/PDEase-like"/>
    <property type="match status" value="1"/>
</dbReference>
<dbReference type="PROSITE" id="PS50861">
    <property type="entry name" value="AA_TRNA_LIGASE_II_GLYAB"/>
    <property type="match status" value="1"/>
</dbReference>
<accession>A4STG3</accession>
<feature type="chain" id="PRO_1000006350" description="Glycine--tRNA ligase beta subunit">
    <location>
        <begin position="1"/>
        <end position="689"/>
    </location>
</feature>
<reference key="1">
    <citation type="journal article" date="2008" name="BMC Genomics">
        <title>The genome of Aeromonas salmonicida subsp. salmonicida A449: insights into the evolution of a fish pathogen.</title>
        <authorList>
            <person name="Reith M.E."/>
            <person name="Singh R.K."/>
            <person name="Curtis B."/>
            <person name="Boyd J.M."/>
            <person name="Bouevitch A."/>
            <person name="Kimball J."/>
            <person name="Munholland J."/>
            <person name="Murphy C."/>
            <person name="Sarty D."/>
            <person name="Williams J."/>
            <person name="Nash J.H."/>
            <person name="Johnson S.C."/>
            <person name="Brown L.L."/>
        </authorList>
    </citation>
    <scope>NUCLEOTIDE SEQUENCE [LARGE SCALE GENOMIC DNA]</scope>
    <source>
        <strain>A449</strain>
    </source>
</reference>
<comment type="catalytic activity">
    <reaction evidence="1">
        <text>tRNA(Gly) + glycine + ATP = glycyl-tRNA(Gly) + AMP + diphosphate</text>
        <dbReference type="Rhea" id="RHEA:16013"/>
        <dbReference type="Rhea" id="RHEA-COMP:9664"/>
        <dbReference type="Rhea" id="RHEA-COMP:9683"/>
        <dbReference type="ChEBI" id="CHEBI:30616"/>
        <dbReference type="ChEBI" id="CHEBI:33019"/>
        <dbReference type="ChEBI" id="CHEBI:57305"/>
        <dbReference type="ChEBI" id="CHEBI:78442"/>
        <dbReference type="ChEBI" id="CHEBI:78522"/>
        <dbReference type="ChEBI" id="CHEBI:456215"/>
        <dbReference type="EC" id="6.1.1.14"/>
    </reaction>
</comment>
<comment type="subunit">
    <text evidence="1">Tetramer of two alpha and two beta subunits.</text>
</comment>
<comment type="subcellular location">
    <subcellularLocation>
        <location evidence="1">Cytoplasm</location>
    </subcellularLocation>
</comment>
<comment type="similarity">
    <text evidence="1">Belongs to the class-II aminoacyl-tRNA synthetase family.</text>
</comment>
<keyword id="KW-0030">Aminoacyl-tRNA synthetase</keyword>
<keyword id="KW-0067">ATP-binding</keyword>
<keyword id="KW-0963">Cytoplasm</keyword>
<keyword id="KW-0436">Ligase</keyword>
<keyword id="KW-0547">Nucleotide-binding</keyword>
<keyword id="KW-0648">Protein biosynthesis</keyword>
<name>SYGB_AERS4</name>
<gene>
    <name evidence="1" type="primary">glyS</name>
    <name type="ordered locus">ASA_4261</name>
</gene>
<sequence>MAQHTFLVEIGTAELPPKALRSLAEAFADNFKAELTKADLAFGDIEWFASPRRLALKVHALASEQPSKSVEKRGPAVSQAFDAEGKPTKAAEGWARGNGITVEQAERLVTDKGEWLVHTAKVEGRPAKDLLGELVASALAKLPIPKMMRWGDKTIQFVRPVFTVTLLLDGELVPAHILGIDSARTIRGHRFMGEPEFTIDNASQYPQILLEKGKVVADFMARKAKIKADAEAAAAAFGGVADLDDALLEEVTALVEWPVVLTANFEEKFLAVPAEALVHTMKGDQKYFPVYDKNGKLLPKFIFVTNIESKDPSQIISGNEKVVRPRLSDAEFFFKTDLKQTLASRLPRLETVLFQQQLGTVKAKVERIETVAGFIAERIGANVAQAKRAGLLSKCDLMTNMVGEFASTQGVMGMHYARHDGEDEVVAVALNEQYMPRFAGDALPSALEACAVALADKLDTLAGIFGIGMLPKGDKDPFALRRAAIGALRIMTEKQLDLDLVELVEEAVRVYGDKLTNKTVVTDVVDFMLGRFRAAYQDEGIGADVVLAVLARRPTRPLDFDRRVKAVSHFRSLDAALALAAANKRVSNILAKVEGELPTAVKPELLQDAAEKALATQVAELQAELAPLFAAGDYQAALTRLAALREPVDTFFNEVMVMADDEALKANRLALLNNLRNLFLQVADISLLQ</sequence>